<feature type="chain" id="PRO_1000194358" description="Probable alpha-L-glutamate ligase">
    <location>
        <begin position="1"/>
        <end position="301"/>
    </location>
</feature>
<feature type="domain" description="ATP-grasp" evidence="1">
    <location>
        <begin position="104"/>
        <end position="287"/>
    </location>
</feature>
<feature type="binding site" evidence="1">
    <location>
        <position position="141"/>
    </location>
    <ligand>
        <name>ATP</name>
        <dbReference type="ChEBI" id="CHEBI:30616"/>
    </ligand>
</feature>
<feature type="binding site" evidence="1">
    <location>
        <begin position="178"/>
        <end position="179"/>
    </location>
    <ligand>
        <name>ATP</name>
        <dbReference type="ChEBI" id="CHEBI:30616"/>
    </ligand>
</feature>
<feature type="binding site" evidence="1">
    <location>
        <position position="187"/>
    </location>
    <ligand>
        <name>ATP</name>
        <dbReference type="ChEBI" id="CHEBI:30616"/>
    </ligand>
</feature>
<feature type="binding site" evidence="1">
    <location>
        <begin position="211"/>
        <end position="213"/>
    </location>
    <ligand>
        <name>ATP</name>
        <dbReference type="ChEBI" id="CHEBI:30616"/>
    </ligand>
</feature>
<feature type="binding site" evidence="1">
    <location>
        <position position="248"/>
    </location>
    <ligand>
        <name>Mg(2+)</name>
        <dbReference type="ChEBI" id="CHEBI:18420"/>
        <label>1</label>
    </ligand>
</feature>
<feature type="binding site" evidence="1">
    <location>
        <position position="248"/>
    </location>
    <ligand>
        <name>Mn(2+)</name>
        <dbReference type="ChEBI" id="CHEBI:29035"/>
        <label>1</label>
    </ligand>
</feature>
<feature type="binding site" evidence="1">
    <location>
        <position position="260"/>
    </location>
    <ligand>
        <name>Mg(2+)</name>
        <dbReference type="ChEBI" id="CHEBI:18420"/>
        <label>1</label>
    </ligand>
</feature>
<feature type="binding site" evidence="1">
    <location>
        <position position="260"/>
    </location>
    <ligand>
        <name>Mg(2+)</name>
        <dbReference type="ChEBI" id="CHEBI:18420"/>
        <label>2</label>
    </ligand>
</feature>
<feature type="binding site" evidence="1">
    <location>
        <position position="260"/>
    </location>
    <ligand>
        <name>Mn(2+)</name>
        <dbReference type="ChEBI" id="CHEBI:29035"/>
        <label>1</label>
    </ligand>
</feature>
<feature type="binding site" evidence="1">
    <location>
        <position position="260"/>
    </location>
    <ligand>
        <name>Mn(2+)</name>
        <dbReference type="ChEBI" id="CHEBI:29035"/>
        <label>2</label>
    </ligand>
</feature>
<feature type="binding site" evidence="1">
    <location>
        <position position="262"/>
    </location>
    <ligand>
        <name>Mg(2+)</name>
        <dbReference type="ChEBI" id="CHEBI:18420"/>
        <label>2</label>
    </ligand>
</feature>
<feature type="binding site" evidence="1">
    <location>
        <position position="262"/>
    </location>
    <ligand>
        <name>Mn(2+)</name>
        <dbReference type="ChEBI" id="CHEBI:29035"/>
        <label>2</label>
    </ligand>
</feature>
<protein>
    <recommendedName>
        <fullName evidence="1">Probable alpha-L-glutamate ligase</fullName>
        <ecNumber evidence="1">6.3.2.-</ecNumber>
    </recommendedName>
</protein>
<name>RIMK_ALISL</name>
<evidence type="ECO:0000255" key="1">
    <source>
        <dbReference type="HAMAP-Rule" id="MF_01552"/>
    </source>
</evidence>
<gene>
    <name evidence="1" type="primary">rimK</name>
    <name type="ordered locus">VSAL_I0760</name>
</gene>
<sequence>MKIGILSRNQDLYSTRRLIEAAESRGHEVKVIDALRCYMNINSEKPQIHFKGEELINYDAIIPRIGASVTFYGTAVLRQFEMMNVYPVNESVAITRSRDKLRSMQLLSRKGIGMPITGFASKPDDVKDLLDMVGGGPVVIKLLEGTQGIGVVLAETRKAAESVVEAFMGLKANIMVQEFIKEAGGADIRCFVIGGKVIAAMKRQGAEGEFRSNLHRGGSASLVKLTPEERKTAVAAANIMGLNVAGVDLLRSDRGPLVMEVNSSPGLEGIEAATGKDVAGLIVDFIEKNAATKGTKTRGKG</sequence>
<proteinExistence type="inferred from homology"/>
<comment type="cofactor">
    <cofactor evidence="1">
        <name>Mg(2+)</name>
        <dbReference type="ChEBI" id="CHEBI:18420"/>
    </cofactor>
    <cofactor evidence="1">
        <name>Mn(2+)</name>
        <dbReference type="ChEBI" id="CHEBI:29035"/>
    </cofactor>
    <text evidence="1">Binds 2 magnesium or manganese ions per subunit.</text>
</comment>
<comment type="similarity">
    <text evidence="1">Belongs to the RimK family.</text>
</comment>
<organism>
    <name type="scientific">Aliivibrio salmonicida (strain LFI1238)</name>
    <name type="common">Vibrio salmonicida (strain LFI1238)</name>
    <dbReference type="NCBI Taxonomy" id="316275"/>
    <lineage>
        <taxon>Bacteria</taxon>
        <taxon>Pseudomonadati</taxon>
        <taxon>Pseudomonadota</taxon>
        <taxon>Gammaproteobacteria</taxon>
        <taxon>Vibrionales</taxon>
        <taxon>Vibrionaceae</taxon>
        <taxon>Aliivibrio</taxon>
    </lineage>
</organism>
<reference key="1">
    <citation type="journal article" date="2008" name="BMC Genomics">
        <title>The genome sequence of the fish pathogen Aliivibrio salmonicida strain LFI1238 shows extensive evidence of gene decay.</title>
        <authorList>
            <person name="Hjerde E."/>
            <person name="Lorentzen M.S."/>
            <person name="Holden M.T."/>
            <person name="Seeger K."/>
            <person name="Paulsen S."/>
            <person name="Bason N."/>
            <person name="Churcher C."/>
            <person name="Harris D."/>
            <person name="Norbertczak H."/>
            <person name="Quail M.A."/>
            <person name="Sanders S."/>
            <person name="Thurston S."/>
            <person name="Parkhill J."/>
            <person name="Willassen N.P."/>
            <person name="Thomson N.R."/>
        </authorList>
    </citation>
    <scope>NUCLEOTIDE SEQUENCE [LARGE SCALE GENOMIC DNA]</scope>
    <source>
        <strain>LFI1238</strain>
    </source>
</reference>
<accession>B6EH18</accession>
<dbReference type="EC" id="6.3.2.-" evidence="1"/>
<dbReference type="EMBL" id="FM178379">
    <property type="protein sequence ID" value="CAQ78445.1"/>
    <property type="molecule type" value="Genomic_DNA"/>
</dbReference>
<dbReference type="RefSeq" id="WP_012549563.1">
    <property type="nucleotide sequence ID" value="NC_011312.1"/>
</dbReference>
<dbReference type="SMR" id="B6EH18"/>
<dbReference type="KEGG" id="vsa:VSAL_I0760"/>
<dbReference type="eggNOG" id="COG0189">
    <property type="taxonomic scope" value="Bacteria"/>
</dbReference>
<dbReference type="HOGENOM" id="CLU_054353_0_1_6"/>
<dbReference type="Proteomes" id="UP000001730">
    <property type="component" value="Chromosome 1"/>
</dbReference>
<dbReference type="GO" id="GO:0005737">
    <property type="term" value="C:cytoplasm"/>
    <property type="evidence" value="ECO:0007669"/>
    <property type="project" value="TreeGrafter"/>
</dbReference>
<dbReference type="GO" id="GO:0005524">
    <property type="term" value="F:ATP binding"/>
    <property type="evidence" value="ECO:0007669"/>
    <property type="project" value="UniProtKB-UniRule"/>
</dbReference>
<dbReference type="GO" id="GO:0046872">
    <property type="term" value="F:metal ion binding"/>
    <property type="evidence" value="ECO:0007669"/>
    <property type="project" value="UniProtKB-KW"/>
</dbReference>
<dbReference type="GO" id="GO:0018169">
    <property type="term" value="F:ribosomal S6-glutamic acid ligase activity"/>
    <property type="evidence" value="ECO:0007669"/>
    <property type="project" value="TreeGrafter"/>
</dbReference>
<dbReference type="GO" id="GO:0036211">
    <property type="term" value="P:protein modification process"/>
    <property type="evidence" value="ECO:0007669"/>
    <property type="project" value="InterPro"/>
</dbReference>
<dbReference type="GO" id="GO:0009432">
    <property type="term" value="P:SOS response"/>
    <property type="evidence" value="ECO:0007669"/>
    <property type="project" value="TreeGrafter"/>
</dbReference>
<dbReference type="GO" id="GO:0006412">
    <property type="term" value="P:translation"/>
    <property type="evidence" value="ECO:0007669"/>
    <property type="project" value="UniProtKB-KW"/>
</dbReference>
<dbReference type="FunFam" id="3.40.50.20:FF:000004">
    <property type="entry name" value="Probable alpha-L-glutamate ligase"/>
    <property type="match status" value="1"/>
</dbReference>
<dbReference type="FunFam" id="3.30.1490.20:FF:000005">
    <property type="entry name" value="Probable alpha-L-glutamate ligase 1"/>
    <property type="match status" value="1"/>
</dbReference>
<dbReference type="FunFam" id="3.30.470.20:FF:000016">
    <property type="entry name" value="Ribosomal protein S6--L-glutamate ligase"/>
    <property type="match status" value="1"/>
</dbReference>
<dbReference type="Gene3D" id="3.40.50.20">
    <property type="match status" value="1"/>
</dbReference>
<dbReference type="Gene3D" id="3.30.1490.20">
    <property type="entry name" value="ATP-grasp fold, A domain"/>
    <property type="match status" value="1"/>
</dbReference>
<dbReference type="Gene3D" id="3.30.470.20">
    <property type="entry name" value="ATP-grasp fold, B domain"/>
    <property type="match status" value="1"/>
</dbReference>
<dbReference type="HAMAP" id="MF_01552">
    <property type="entry name" value="RimK"/>
    <property type="match status" value="1"/>
</dbReference>
<dbReference type="InterPro" id="IPR011761">
    <property type="entry name" value="ATP-grasp"/>
</dbReference>
<dbReference type="InterPro" id="IPR013651">
    <property type="entry name" value="ATP-grasp_RimK-type"/>
</dbReference>
<dbReference type="InterPro" id="IPR013815">
    <property type="entry name" value="ATP_grasp_subdomain_1"/>
</dbReference>
<dbReference type="InterPro" id="IPR023533">
    <property type="entry name" value="RimK"/>
</dbReference>
<dbReference type="InterPro" id="IPR041107">
    <property type="entry name" value="Rimk_N"/>
</dbReference>
<dbReference type="InterPro" id="IPR004666">
    <property type="entry name" value="Rp_bS6_RimK/Lys_biosynth_LsyX"/>
</dbReference>
<dbReference type="NCBIfam" id="NF007764">
    <property type="entry name" value="PRK10446.1"/>
    <property type="match status" value="1"/>
</dbReference>
<dbReference type="NCBIfam" id="TIGR00768">
    <property type="entry name" value="rimK_fam"/>
    <property type="match status" value="1"/>
</dbReference>
<dbReference type="PANTHER" id="PTHR21621:SF7">
    <property type="entry name" value="RIBOSOMAL PROTEIN BS6--L-GLUTAMATE LIGASE"/>
    <property type="match status" value="1"/>
</dbReference>
<dbReference type="PANTHER" id="PTHR21621">
    <property type="entry name" value="RIBOSOMAL PROTEIN S6 MODIFICATION PROTEIN"/>
    <property type="match status" value="1"/>
</dbReference>
<dbReference type="Pfam" id="PF08443">
    <property type="entry name" value="RimK"/>
    <property type="match status" value="1"/>
</dbReference>
<dbReference type="Pfam" id="PF18030">
    <property type="entry name" value="Rimk_N"/>
    <property type="match status" value="1"/>
</dbReference>
<dbReference type="SUPFAM" id="SSF56059">
    <property type="entry name" value="Glutathione synthetase ATP-binding domain-like"/>
    <property type="match status" value="1"/>
</dbReference>
<dbReference type="PROSITE" id="PS50975">
    <property type="entry name" value="ATP_GRASP"/>
    <property type="match status" value="1"/>
</dbReference>
<keyword id="KW-0067">ATP-binding</keyword>
<keyword id="KW-0436">Ligase</keyword>
<keyword id="KW-0460">Magnesium</keyword>
<keyword id="KW-0464">Manganese</keyword>
<keyword id="KW-0479">Metal-binding</keyword>
<keyword id="KW-0547">Nucleotide-binding</keyword>
<keyword id="KW-0648">Protein biosynthesis</keyword>